<reference key="1">
    <citation type="journal article" date="2008" name="Mol. Cell. Biol.">
        <title>MURC, a muscle-restricted coiled-coil protein that modulates the Rho/ROCK pathway, induces cardiac dysfunction and conduction disturbance.</title>
        <authorList>
            <person name="Ogata T."/>
            <person name="Ueyama T."/>
            <person name="Isodono K."/>
            <person name="Tagawa M."/>
            <person name="Takehara N."/>
            <person name="Kawashima T."/>
            <person name="Harada K."/>
            <person name="Takahashi T."/>
            <person name="Shioi T."/>
            <person name="Matsubara H."/>
            <person name="Oh H."/>
        </authorList>
    </citation>
    <scope>NUCLEOTIDE SEQUENCE [MRNA]</scope>
    <scope>FUNCTION</scope>
    <scope>INTERACTION WITH CAVIN2</scope>
    <source>
        <tissue>Heart</tissue>
    </source>
</reference>
<reference key="2">
    <citation type="journal article" date="2004" name="Nat. Genet.">
        <title>Complete sequencing and characterization of 21,243 full-length human cDNAs.</title>
        <authorList>
            <person name="Ota T."/>
            <person name="Suzuki Y."/>
            <person name="Nishikawa T."/>
            <person name="Otsuki T."/>
            <person name="Sugiyama T."/>
            <person name="Irie R."/>
            <person name="Wakamatsu A."/>
            <person name="Hayashi K."/>
            <person name="Sato H."/>
            <person name="Nagai K."/>
            <person name="Kimura K."/>
            <person name="Makita H."/>
            <person name="Sekine M."/>
            <person name="Obayashi M."/>
            <person name="Nishi T."/>
            <person name="Shibahara T."/>
            <person name="Tanaka T."/>
            <person name="Ishii S."/>
            <person name="Yamamoto J."/>
            <person name="Saito K."/>
            <person name="Kawai Y."/>
            <person name="Isono Y."/>
            <person name="Nakamura Y."/>
            <person name="Nagahari K."/>
            <person name="Murakami K."/>
            <person name="Yasuda T."/>
            <person name="Iwayanagi T."/>
            <person name="Wagatsuma M."/>
            <person name="Shiratori A."/>
            <person name="Sudo H."/>
            <person name="Hosoiri T."/>
            <person name="Kaku Y."/>
            <person name="Kodaira H."/>
            <person name="Kondo H."/>
            <person name="Sugawara M."/>
            <person name="Takahashi M."/>
            <person name="Kanda K."/>
            <person name="Yokoi T."/>
            <person name="Furuya T."/>
            <person name="Kikkawa E."/>
            <person name="Omura Y."/>
            <person name="Abe K."/>
            <person name="Kamihara K."/>
            <person name="Katsuta N."/>
            <person name="Sato K."/>
            <person name="Tanikawa M."/>
            <person name="Yamazaki M."/>
            <person name="Ninomiya K."/>
            <person name="Ishibashi T."/>
            <person name="Yamashita H."/>
            <person name="Murakawa K."/>
            <person name="Fujimori K."/>
            <person name="Tanai H."/>
            <person name="Kimata M."/>
            <person name="Watanabe M."/>
            <person name="Hiraoka S."/>
            <person name="Chiba Y."/>
            <person name="Ishida S."/>
            <person name="Ono Y."/>
            <person name="Takiguchi S."/>
            <person name="Watanabe S."/>
            <person name="Yosida M."/>
            <person name="Hotuta T."/>
            <person name="Kusano J."/>
            <person name="Kanehori K."/>
            <person name="Takahashi-Fujii A."/>
            <person name="Hara H."/>
            <person name="Tanase T.-O."/>
            <person name="Nomura Y."/>
            <person name="Togiya S."/>
            <person name="Komai F."/>
            <person name="Hara R."/>
            <person name="Takeuchi K."/>
            <person name="Arita M."/>
            <person name="Imose N."/>
            <person name="Musashino K."/>
            <person name="Yuuki H."/>
            <person name="Oshima A."/>
            <person name="Sasaki N."/>
            <person name="Aotsuka S."/>
            <person name="Yoshikawa Y."/>
            <person name="Matsunawa H."/>
            <person name="Ichihara T."/>
            <person name="Shiohata N."/>
            <person name="Sano S."/>
            <person name="Moriya S."/>
            <person name="Momiyama H."/>
            <person name="Satoh N."/>
            <person name="Takami S."/>
            <person name="Terashima Y."/>
            <person name="Suzuki O."/>
            <person name="Nakagawa S."/>
            <person name="Senoh A."/>
            <person name="Mizoguchi H."/>
            <person name="Goto Y."/>
            <person name="Shimizu F."/>
            <person name="Wakebe H."/>
            <person name="Hishigaki H."/>
            <person name="Watanabe T."/>
            <person name="Sugiyama A."/>
            <person name="Takemoto M."/>
            <person name="Kawakami B."/>
            <person name="Yamazaki M."/>
            <person name="Watanabe K."/>
            <person name="Kumagai A."/>
            <person name="Itakura S."/>
            <person name="Fukuzumi Y."/>
            <person name="Fujimori Y."/>
            <person name="Komiyama M."/>
            <person name="Tashiro H."/>
            <person name="Tanigami A."/>
            <person name="Fujiwara T."/>
            <person name="Ono T."/>
            <person name="Yamada K."/>
            <person name="Fujii Y."/>
            <person name="Ozaki K."/>
            <person name="Hirao M."/>
            <person name="Ohmori Y."/>
            <person name="Kawabata A."/>
            <person name="Hikiji T."/>
            <person name="Kobatake N."/>
            <person name="Inagaki H."/>
            <person name="Ikema Y."/>
            <person name="Okamoto S."/>
            <person name="Okitani R."/>
            <person name="Kawakami T."/>
            <person name="Noguchi S."/>
            <person name="Itoh T."/>
            <person name="Shigeta K."/>
            <person name="Senba T."/>
            <person name="Matsumura K."/>
            <person name="Nakajima Y."/>
            <person name="Mizuno T."/>
            <person name="Morinaga M."/>
            <person name="Sasaki M."/>
            <person name="Togashi T."/>
            <person name="Oyama M."/>
            <person name="Hata H."/>
            <person name="Watanabe M."/>
            <person name="Komatsu T."/>
            <person name="Mizushima-Sugano J."/>
            <person name="Satoh T."/>
            <person name="Shirai Y."/>
            <person name="Takahashi Y."/>
            <person name="Nakagawa K."/>
            <person name="Okumura K."/>
            <person name="Nagase T."/>
            <person name="Nomura N."/>
            <person name="Kikuchi H."/>
            <person name="Masuho Y."/>
            <person name="Yamashita R."/>
            <person name="Nakai K."/>
            <person name="Yada T."/>
            <person name="Nakamura Y."/>
            <person name="Ohara O."/>
            <person name="Isogai T."/>
            <person name="Sugano S."/>
        </authorList>
    </citation>
    <scope>NUCLEOTIDE SEQUENCE [LARGE SCALE MRNA]</scope>
    <source>
        <tissue>Pericardium</tissue>
    </source>
</reference>
<reference key="3">
    <citation type="journal article" date="2004" name="Nature">
        <title>DNA sequence and analysis of human chromosome 9.</title>
        <authorList>
            <person name="Humphray S.J."/>
            <person name="Oliver K."/>
            <person name="Hunt A.R."/>
            <person name="Plumb R.W."/>
            <person name="Loveland J.E."/>
            <person name="Howe K.L."/>
            <person name="Andrews T.D."/>
            <person name="Searle S."/>
            <person name="Hunt S.E."/>
            <person name="Scott C.E."/>
            <person name="Jones M.C."/>
            <person name="Ainscough R."/>
            <person name="Almeida J.P."/>
            <person name="Ambrose K.D."/>
            <person name="Ashwell R.I.S."/>
            <person name="Babbage A.K."/>
            <person name="Babbage S."/>
            <person name="Bagguley C.L."/>
            <person name="Bailey J."/>
            <person name="Banerjee R."/>
            <person name="Barker D.J."/>
            <person name="Barlow K.F."/>
            <person name="Bates K."/>
            <person name="Beasley H."/>
            <person name="Beasley O."/>
            <person name="Bird C.P."/>
            <person name="Bray-Allen S."/>
            <person name="Brown A.J."/>
            <person name="Brown J.Y."/>
            <person name="Burford D."/>
            <person name="Burrill W."/>
            <person name="Burton J."/>
            <person name="Carder C."/>
            <person name="Carter N.P."/>
            <person name="Chapman J.C."/>
            <person name="Chen Y."/>
            <person name="Clarke G."/>
            <person name="Clark S.Y."/>
            <person name="Clee C.M."/>
            <person name="Clegg S."/>
            <person name="Collier R.E."/>
            <person name="Corby N."/>
            <person name="Crosier M."/>
            <person name="Cummings A.T."/>
            <person name="Davies J."/>
            <person name="Dhami P."/>
            <person name="Dunn M."/>
            <person name="Dutta I."/>
            <person name="Dyer L.W."/>
            <person name="Earthrowl M.E."/>
            <person name="Faulkner L."/>
            <person name="Fleming C.J."/>
            <person name="Frankish A."/>
            <person name="Frankland J.A."/>
            <person name="French L."/>
            <person name="Fricker D.G."/>
            <person name="Garner P."/>
            <person name="Garnett J."/>
            <person name="Ghori J."/>
            <person name="Gilbert J.G.R."/>
            <person name="Glison C."/>
            <person name="Grafham D.V."/>
            <person name="Gribble S."/>
            <person name="Griffiths C."/>
            <person name="Griffiths-Jones S."/>
            <person name="Grocock R."/>
            <person name="Guy J."/>
            <person name="Hall R.E."/>
            <person name="Hammond S."/>
            <person name="Harley J.L."/>
            <person name="Harrison E.S.I."/>
            <person name="Hart E.A."/>
            <person name="Heath P.D."/>
            <person name="Henderson C.D."/>
            <person name="Hopkins B.L."/>
            <person name="Howard P.J."/>
            <person name="Howden P.J."/>
            <person name="Huckle E."/>
            <person name="Johnson C."/>
            <person name="Johnson D."/>
            <person name="Joy A.A."/>
            <person name="Kay M."/>
            <person name="Keenan S."/>
            <person name="Kershaw J.K."/>
            <person name="Kimberley A.M."/>
            <person name="King A."/>
            <person name="Knights A."/>
            <person name="Laird G.K."/>
            <person name="Langford C."/>
            <person name="Lawlor S."/>
            <person name="Leongamornlert D.A."/>
            <person name="Leversha M."/>
            <person name="Lloyd C."/>
            <person name="Lloyd D.M."/>
            <person name="Lovell J."/>
            <person name="Martin S."/>
            <person name="Mashreghi-Mohammadi M."/>
            <person name="Matthews L."/>
            <person name="McLaren S."/>
            <person name="McLay K.E."/>
            <person name="McMurray A."/>
            <person name="Milne S."/>
            <person name="Nickerson T."/>
            <person name="Nisbett J."/>
            <person name="Nordsiek G."/>
            <person name="Pearce A.V."/>
            <person name="Peck A.I."/>
            <person name="Porter K.M."/>
            <person name="Pandian R."/>
            <person name="Pelan S."/>
            <person name="Phillimore B."/>
            <person name="Povey S."/>
            <person name="Ramsey Y."/>
            <person name="Rand V."/>
            <person name="Scharfe M."/>
            <person name="Sehra H.K."/>
            <person name="Shownkeen R."/>
            <person name="Sims S.K."/>
            <person name="Skuce C.D."/>
            <person name="Smith M."/>
            <person name="Steward C.A."/>
            <person name="Swarbreck D."/>
            <person name="Sycamore N."/>
            <person name="Tester J."/>
            <person name="Thorpe A."/>
            <person name="Tracey A."/>
            <person name="Tromans A."/>
            <person name="Thomas D.W."/>
            <person name="Wall M."/>
            <person name="Wallis J.M."/>
            <person name="West A.P."/>
            <person name="Whitehead S.L."/>
            <person name="Willey D.L."/>
            <person name="Williams S.A."/>
            <person name="Wilming L."/>
            <person name="Wray P.W."/>
            <person name="Young L."/>
            <person name="Ashurst J.L."/>
            <person name="Coulson A."/>
            <person name="Blocker H."/>
            <person name="Durbin R.M."/>
            <person name="Sulston J.E."/>
            <person name="Hubbard T."/>
            <person name="Jackson M.J."/>
            <person name="Bentley D.R."/>
            <person name="Beck S."/>
            <person name="Rogers J."/>
            <person name="Dunham I."/>
        </authorList>
    </citation>
    <scope>NUCLEOTIDE SEQUENCE [LARGE SCALE GENOMIC DNA]</scope>
</reference>
<reference key="4">
    <citation type="journal article" date="2004" name="Genome Res.">
        <title>The status, quality, and expansion of the NIH full-length cDNA project: the Mammalian Gene Collection (MGC).</title>
        <authorList>
            <consortium name="The MGC Project Team"/>
        </authorList>
    </citation>
    <scope>NUCLEOTIDE SEQUENCE [LARGE SCALE MRNA] OF 7-364</scope>
    <source>
        <tissue>Muscle</tissue>
    </source>
</reference>
<reference key="5">
    <citation type="journal article" date="2009" name="Nat. Cell Biol.">
        <title>SDPR induces membrane curvature and functions in the formation of caveolae.</title>
        <authorList>
            <person name="Hansen C.G."/>
            <person name="Bright N.A."/>
            <person name="Howard G."/>
            <person name="Nichols B.J."/>
        </authorList>
    </citation>
    <scope>SUBCELLULAR LOCATION</scope>
</reference>
<reference key="6">
    <citation type="journal article" date="2014" name="Proc. Natl. Acad. Sci. U.S.A.">
        <title>MURC/Cavin-4 facilitates recruitment of ERK to caveolae and concentric cardiac hypertrophy induced by alpha1-adrenergic receptors.</title>
        <authorList>
            <person name="Ogata T."/>
            <person name="Naito D."/>
            <person name="Nakanishi N."/>
            <person name="Hayashi Y.K."/>
            <person name="Taniguchi T."/>
            <person name="Miyagawa K."/>
            <person name="Hamaoka T."/>
            <person name="Maruyama N."/>
            <person name="Matoba S."/>
            <person name="Ikeda K."/>
            <person name="Yamada H."/>
            <person name="Oh H."/>
            <person name="Ueyama T."/>
        </authorList>
    </citation>
    <scope>INTERACTION WITH ADRA1A; ADRA1B; CAVIN1; CAVIN2 AND CAV3</scope>
</reference>
<reference key="7">
    <citation type="journal article" date="2015" name="Am. J. Physiol.">
        <title>The coiled-coil domain of MURC/cavin-4 is involved in membrane trafficking of caveolin-3 in cardiomyocytes.</title>
        <authorList>
            <person name="Naito D."/>
            <person name="Ogata T."/>
            <person name="Hamaoka T."/>
            <person name="Nakanishi N."/>
            <person name="Miyagawa K."/>
            <person name="Maruyama N."/>
            <person name="Kasahara T."/>
            <person name="Taniguchi T."/>
            <person name="Nishi M."/>
            <person name="Matoba S."/>
            <person name="Ueyama T."/>
        </authorList>
    </citation>
    <scope>INTERACTION WITH CAV3</scope>
    <scope>SUBCELLULAR LOCATION</scope>
    <scope>DOMAIN COILED-COIL</scope>
</reference>
<reference key="8">
    <citation type="journal article" date="2015" name="Int. Rev. Cell Mol. Biol.">
        <title>Cavin family: new players in the biology of caveolae.</title>
        <authorList>
            <person name="Nassar Z.D."/>
            <person name="Parat M.O."/>
        </authorList>
    </citation>
    <scope>REVIEW</scope>
</reference>
<comment type="function">
    <text evidence="1 5">Modulates the morphology of formed caveolae in cardiomyocytes, but is not required for caveolar formation. Facilitates the recruitment of MAPK1/3 to caveolae within cardiomyocytes and regulates alpha-1 adrenergic receptor-induced hypertrophic responses in cardiomyocytes through MAPK1/3 activation. Contributes to proper membrane localization and stabilization of caveolin-3 (CAV3) in cardiomyocytes (By similarity). Induces RHOA activation and activates NPPA transcription and myofibrillar organization through the Rho/ROCK signaling pathway (PubMed:18332105).</text>
</comment>
<comment type="subunit">
    <text evidence="1 2 5 7 8">Component of the CAVIN complex composed of CAVIN1, CAVIN2, CAVIN3 and CAVIN4 (By similarity). Interacts with CAVIN1, ADRA1A and ADRA1B (PubMed:24567387). Interacts with CAVIN2; this augments the transactivation of NPPA (PubMed:18332105, PubMed:24567387). Interacts with CAV3 (PubMed:24567387, PubMed:26497963). Interacts with MAPK1 and MAPK3 (By similarity).</text>
</comment>
<comment type="interaction">
    <interactant intactId="EBI-12836558">
        <id>Q5BKX8</id>
    </interactant>
    <interactant intactId="EBI-358049">
        <id>Q13895</id>
        <label>BYSL</label>
    </interactant>
    <organismsDiffer>false</organismsDiffer>
    <experiments>3</experiments>
</comment>
<comment type="interaction">
    <interactant intactId="EBI-12836558">
        <id>Q5BKX8</id>
    </interactant>
    <interactant intactId="EBI-741158">
        <id>Q96HA8</id>
        <label>NTAQ1</label>
    </interactant>
    <organismsDiffer>false</organismsDiffer>
    <experiments>3</experiments>
</comment>
<comment type="interaction">
    <interactant intactId="EBI-12836558">
        <id>Q5BKX8</id>
    </interactant>
    <interactant intactId="EBI-10183064">
        <id>Q8N5A5-2</id>
        <label>ZGPAT</label>
    </interactant>
    <organismsDiffer>false</organismsDiffer>
    <experiments>3</experiments>
</comment>
<comment type="subcellular location">
    <subcellularLocation>
        <location evidence="1">Cytoplasm</location>
        <location evidence="1">Myofibril</location>
        <location evidence="1">Sarcomere</location>
    </subcellularLocation>
    <subcellularLocation>
        <location evidence="1">Cytoplasm</location>
    </subcellularLocation>
    <subcellularLocation>
        <location evidence="1">Cytoplasm</location>
        <location evidence="1">Cytosol</location>
    </subcellularLocation>
    <subcellularLocation>
        <location evidence="1">Cell membrane</location>
        <location evidence="1">Sarcolemma</location>
    </subcellularLocation>
    <subcellularLocation>
        <location evidence="6">Membrane</location>
        <location evidence="6">Caveola</location>
    </subcellularLocation>
    <subcellularLocation>
        <location evidence="8">Cell membrane</location>
    </subcellularLocation>
    <text evidence="1">In cardiomyocytes, accumulates in the Z-line of the sarcomere. In vascular smooth muscle cells, detected diffusely throughout the cytoplasm. Localizes in the caveolae in a caveolin-dependent manner.</text>
</comment>
<comment type="domain">
    <text evidence="8">The coiled coil domain (residues 44-77) is essential for membrane-targeting in cardiomyocytes.</text>
</comment>
<comment type="similarity">
    <text evidence="9">Belongs to the CAVIN family.</text>
</comment>
<comment type="sequence caution" evidence="9">
    <conflict type="erroneous initiation">
        <sequence resource="EMBL-CDS" id="AAH90888"/>
    </conflict>
</comment>
<proteinExistence type="evidence at protein level"/>
<gene>
    <name evidence="10" type="primary">CAVIN4</name>
    <name type="synonym">MURC</name>
</gene>
<name>CAVN4_HUMAN</name>
<keyword id="KW-0010">Activator</keyword>
<keyword id="KW-1003">Cell membrane</keyword>
<keyword id="KW-0175">Coiled coil</keyword>
<keyword id="KW-0963">Cytoplasm</keyword>
<keyword id="KW-0217">Developmental protein</keyword>
<keyword id="KW-0221">Differentiation</keyword>
<keyword id="KW-0472">Membrane</keyword>
<keyword id="KW-0517">Myogenesis</keyword>
<keyword id="KW-0597">Phosphoprotein</keyword>
<keyword id="KW-1267">Proteomics identification</keyword>
<keyword id="KW-1185">Reference proteome</keyword>
<keyword id="KW-0804">Transcription</keyword>
<keyword id="KW-0805">Transcription regulation</keyword>
<accession>Q5BKX8</accession>
<accession>B1PRL3</accession>
<accession>B4DT88</accession>
<organism>
    <name type="scientific">Homo sapiens</name>
    <name type="common">Human</name>
    <dbReference type="NCBI Taxonomy" id="9606"/>
    <lineage>
        <taxon>Eukaryota</taxon>
        <taxon>Metazoa</taxon>
        <taxon>Chordata</taxon>
        <taxon>Craniata</taxon>
        <taxon>Vertebrata</taxon>
        <taxon>Euteleostomi</taxon>
        <taxon>Mammalia</taxon>
        <taxon>Eutheria</taxon>
        <taxon>Euarchontoglires</taxon>
        <taxon>Primates</taxon>
        <taxon>Haplorrhini</taxon>
        <taxon>Catarrhini</taxon>
        <taxon>Hominidae</taxon>
        <taxon>Homo</taxon>
    </lineage>
</organism>
<sequence length="364" mass="41899">MEHNGSASNADKIHQNRLSSVTEDEDQDAALTIVTVLDKVASIVDSVQASQKRIEERHREMENAIKSVQIDLLKLSQSHSNTGHIINKLFEKTRKVSAHIKDVKARVEKQQIHVKKVEVKQEEIMKKNKFRVVIFQEKFRCPTSLSVVKDRNLTENQEEDDDDIFDPPVDLSSDEEYYVEESRSARLRKSGKEHIDNIKKAFSKENMQKTRQNLDKKVNRIRTRIVTPERRERLRQSGERLRQSGERLRQSGERFKKSISNAAPSKEAFKMRSLRKGKDRTVAEGEECAREMGVDIIARSESLGPISELYSDELSEPEHEAARPVYPPHEGREIPTPEPLKVTFKSQVKVEDDESLLLDLKHSS</sequence>
<protein>
    <recommendedName>
        <fullName evidence="10">Caveolae-associated protein 4</fullName>
    </recommendedName>
    <alternativeName>
        <fullName>Muscle-related coiled-coil protein</fullName>
    </alternativeName>
    <alternativeName>
        <fullName>Muscle-restricted coiled-coil protein</fullName>
    </alternativeName>
</protein>
<evidence type="ECO:0000250" key="1">
    <source>
        <dbReference type="UniProtKB" id="A2AMM0"/>
    </source>
</evidence>
<evidence type="ECO:0000250" key="2">
    <source>
        <dbReference type="UniProtKB" id="B1PRL5"/>
    </source>
</evidence>
<evidence type="ECO:0000255" key="3"/>
<evidence type="ECO:0000256" key="4">
    <source>
        <dbReference type="SAM" id="MobiDB-lite"/>
    </source>
</evidence>
<evidence type="ECO:0000269" key="5">
    <source>
    </source>
</evidence>
<evidence type="ECO:0000269" key="6">
    <source>
    </source>
</evidence>
<evidence type="ECO:0000269" key="7">
    <source>
    </source>
</evidence>
<evidence type="ECO:0000269" key="8">
    <source>
    </source>
</evidence>
<evidence type="ECO:0000305" key="9"/>
<evidence type="ECO:0000312" key="10">
    <source>
        <dbReference type="HGNC" id="HGNC:33742"/>
    </source>
</evidence>
<feature type="chain" id="PRO_0000325763" description="Caveolae-associated protein 4">
    <location>
        <begin position="1"/>
        <end position="364"/>
    </location>
</feature>
<feature type="region of interest" description="Disordered" evidence="4">
    <location>
        <begin position="1"/>
        <end position="24"/>
    </location>
</feature>
<feature type="region of interest" description="Disordered" evidence="4">
    <location>
        <begin position="231"/>
        <end position="283"/>
    </location>
</feature>
<feature type="region of interest" description="Disordered" evidence="4">
    <location>
        <begin position="311"/>
        <end position="339"/>
    </location>
</feature>
<feature type="coiled-coil region" evidence="3">
    <location>
        <begin position="44"/>
        <end position="77"/>
    </location>
</feature>
<feature type="coiled-coil region" evidence="3">
    <location>
        <begin position="202"/>
        <end position="226"/>
    </location>
</feature>
<feature type="compositionally biased region" description="Basic and acidic residues" evidence="4">
    <location>
        <begin position="231"/>
        <end position="256"/>
    </location>
</feature>
<feature type="modified residue" description="Phosphoserine" evidence="2">
    <location>
        <position position="172"/>
    </location>
</feature>
<feature type="modified residue" description="Phosphoserine" evidence="2">
    <location>
        <position position="173"/>
    </location>
</feature>
<feature type="modified residue" description="Phosphotyrosine" evidence="1">
    <location>
        <position position="326"/>
    </location>
</feature>
<feature type="modified residue" description="Phosphothreonine" evidence="1">
    <location>
        <position position="336"/>
    </location>
</feature>
<feature type="modified residue" description="Phosphoserine" evidence="1">
    <location>
        <position position="355"/>
    </location>
</feature>
<feature type="sequence conflict" description="In Ref. 2; BAG61900." evidence="9" ref="2">
    <original>V</original>
    <variation>A</variation>
    <location>
        <position position="34"/>
    </location>
</feature>
<dbReference type="EMBL" id="EU487253">
    <property type="protein sequence ID" value="ACA62935.1"/>
    <property type="molecule type" value="mRNA"/>
</dbReference>
<dbReference type="EMBL" id="AK300099">
    <property type="protein sequence ID" value="BAG61900.1"/>
    <property type="molecule type" value="mRNA"/>
</dbReference>
<dbReference type="EMBL" id="AL354917">
    <property type="status" value="NOT_ANNOTATED_CDS"/>
    <property type="molecule type" value="Genomic_DNA"/>
</dbReference>
<dbReference type="EMBL" id="BC090888">
    <property type="protein sequence ID" value="AAH90888.1"/>
    <property type="status" value="ALT_INIT"/>
    <property type="molecule type" value="mRNA"/>
</dbReference>
<dbReference type="CCDS" id="CCDS35083.1"/>
<dbReference type="RefSeq" id="NP_001018126.1">
    <property type="nucleotide sequence ID" value="NM_001018116.2"/>
</dbReference>
<dbReference type="SMR" id="Q5BKX8"/>
<dbReference type="BioGRID" id="131419">
    <property type="interactions" value="8"/>
</dbReference>
<dbReference type="CORUM" id="Q5BKX8"/>
<dbReference type="FunCoup" id="Q5BKX8">
    <property type="interactions" value="11"/>
</dbReference>
<dbReference type="IntAct" id="Q5BKX8">
    <property type="interactions" value="5"/>
</dbReference>
<dbReference type="STRING" id="9606.ENSP00000418668"/>
<dbReference type="GlyGen" id="Q5BKX8">
    <property type="glycosylation" value="1 site, 1 O-linked glycan (1 site)"/>
</dbReference>
<dbReference type="iPTMnet" id="Q5BKX8"/>
<dbReference type="PhosphoSitePlus" id="Q5BKX8"/>
<dbReference type="BioMuta" id="CAVIN4"/>
<dbReference type="DMDM" id="172045939"/>
<dbReference type="MassIVE" id="Q5BKX8"/>
<dbReference type="PaxDb" id="9606-ENSP00000418668"/>
<dbReference type="PeptideAtlas" id="Q5BKX8"/>
<dbReference type="ProteomicsDB" id="62708"/>
<dbReference type="Antibodypedia" id="14631">
    <property type="antibodies" value="81 antibodies from 16 providers"/>
</dbReference>
<dbReference type="DNASU" id="347273"/>
<dbReference type="Ensembl" id="ENST00000307584.6">
    <property type="protein sequence ID" value="ENSP00000418668.1"/>
    <property type="gene ID" value="ENSG00000170681.7"/>
</dbReference>
<dbReference type="GeneID" id="347273"/>
<dbReference type="KEGG" id="hsa:347273"/>
<dbReference type="MANE-Select" id="ENST00000307584.6">
    <property type="protein sequence ID" value="ENSP00000418668.1"/>
    <property type="RefSeq nucleotide sequence ID" value="NM_001018116.2"/>
    <property type="RefSeq protein sequence ID" value="NP_001018126.1"/>
</dbReference>
<dbReference type="UCSC" id="uc004bba.5">
    <property type="organism name" value="human"/>
</dbReference>
<dbReference type="AGR" id="HGNC:33742"/>
<dbReference type="CTD" id="347273"/>
<dbReference type="DisGeNET" id="347273"/>
<dbReference type="GeneCards" id="CAVIN4"/>
<dbReference type="HGNC" id="HGNC:33742">
    <property type="gene designation" value="CAVIN4"/>
</dbReference>
<dbReference type="HPA" id="ENSG00000170681">
    <property type="expression patterns" value="Group enriched (skeletal muscle, tongue)"/>
</dbReference>
<dbReference type="MalaCards" id="CAVIN4"/>
<dbReference type="MIM" id="617714">
    <property type="type" value="gene"/>
</dbReference>
<dbReference type="neXtProt" id="NX_Q5BKX8"/>
<dbReference type="OpenTargets" id="ENSG00000170681"/>
<dbReference type="PharmGKB" id="PA164723237"/>
<dbReference type="VEuPathDB" id="HostDB:ENSG00000170681"/>
<dbReference type="eggNOG" id="ENOG502QQ9A">
    <property type="taxonomic scope" value="Eukaryota"/>
</dbReference>
<dbReference type="GeneTree" id="ENSGT00950000182910"/>
<dbReference type="HOGENOM" id="CLU_065589_1_0_1"/>
<dbReference type="InParanoid" id="Q5BKX8"/>
<dbReference type="OMA" id="AFCPPDD"/>
<dbReference type="OrthoDB" id="8924144at2759"/>
<dbReference type="PAN-GO" id="Q5BKX8">
    <property type="GO annotations" value="3 GO annotations based on evolutionary models"/>
</dbReference>
<dbReference type="PhylomeDB" id="Q5BKX8"/>
<dbReference type="TreeFam" id="TF331031"/>
<dbReference type="PathwayCommons" id="Q5BKX8"/>
<dbReference type="SignaLink" id="Q5BKX8"/>
<dbReference type="BioGRID-ORCS" id="347273">
    <property type="hits" value="10 hits in 1145 CRISPR screens"/>
</dbReference>
<dbReference type="ChiTaRS" id="MURC">
    <property type="organism name" value="human"/>
</dbReference>
<dbReference type="GenomeRNAi" id="347273"/>
<dbReference type="Pharos" id="Q5BKX8">
    <property type="development level" value="Tbio"/>
</dbReference>
<dbReference type="PRO" id="PR:Q5BKX8"/>
<dbReference type="Proteomes" id="UP000005640">
    <property type="component" value="Chromosome 9"/>
</dbReference>
<dbReference type="RNAct" id="Q5BKX8">
    <property type="molecule type" value="protein"/>
</dbReference>
<dbReference type="Bgee" id="ENSG00000170681">
    <property type="expression patterns" value="Expressed in quadriceps femoris and 116 other cell types or tissues"/>
</dbReference>
<dbReference type="GO" id="GO:0005901">
    <property type="term" value="C:caveola"/>
    <property type="evidence" value="ECO:0000314"/>
    <property type="project" value="UniProtKB"/>
</dbReference>
<dbReference type="GO" id="GO:0005737">
    <property type="term" value="C:cytoplasm"/>
    <property type="evidence" value="ECO:0000318"/>
    <property type="project" value="GO_Central"/>
</dbReference>
<dbReference type="GO" id="GO:0005829">
    <property type="term" value="C:cytosol"/>
    <property type="evidence" value="ECO:0007669"/>
    <property type="project" value="UniProtKB-SubCell"/>
</dbReference>
<dbReference type="GO" id="GO:0005886">
    <property type="term" value="C:plasma membrane"/>
    <property type="evidence" value="ECO:0000314"/>
    <property type="project" value="UniProtKB"/>
</dbReference>
<dbReference type="GO" id="GO:0042383">
    <property type="term" value="C:sarcolemma"/>
    <property type="evidence" value="ECO:0007669"/>
    <property type="project" value="UniProtKB-SubCell"/>
</dbReference>
<dbReference type="GO" id="GO:0016528">
    <property type="term" value="C:sarcoplasm"/>
    <property type="evidence" value="ECO:0007669"/>
    <property type="project" value="Ensembl"/>
</dbReference>
<dbReference type="GO" id="GO:0030018">
    <property type="term" value="C:Z disc"/>
    <property type="evidence" value="ECO:0007669"/>
    <property type="project" value="Ensembl"/>
</dbReference>
<dbReference type="GO" id="GO:0030154">
    <property type="term" value="P:cell differentiation"/>
    <property type="evidence" value="ECO:0007669"/>
    <property type="project" value="UniProtKB-KW"/>
</dbReference>
<dbReference type="GO" id="GO:0007517">
    <property type="term" value="P:muscle organ development"/>
    <property type="evidence" value="ECO:0007669"/>
    <property type="project" value="UniProtKB-KW"/>
</dbReference>
<dbReference type="GO" id="GO:0045944">
    <property type="term" value="P:positive regulation of transcription by RNA polymerase II"/>
    <property type="evidence" value="ECO:0007669"/>
    <property type="project" value="Ensembl"/>
</dbReference>
<dbReference type="GO" id="GO:0010468">
    <property type="term" value="P:regulation of gene expression"/>
    <property type="evidence" value="ECO:0000315"/>
    <property type="project" value="CACAO"/>
</dbReference>
<dbReference type="InterPro" id="IPR026752">
    <property type="entry name" value="Cavin_fam"/>
</dbReference>
<dbReference type="PANTHER" id="PTHR15240:SF4">
    <property type="entry name" value="CAVEOLAE-ASSOCIATED PROTEIN 4"/>
    <property type="match status" value="1"/>
</dbReference>
<dbReference type="PANTHER" id="PTHR15240">
    <property type="entry name" value="CAVIN"/>
    <property type="match status" value="1"/>
</dbReference>
<dbReference type="Pfam" id="PF15237">
    <property type="entry name" value="PTRF_SDPR"/>
    <property type="match status" value="1"/>
</dbReference>